<keyword id="KW-0002">3D-structure</keyword>
<keyword id="KW-0007">Acetylation</keyword>
<keyword id="KW-0025">Alternative splicing</keyword>
<keyword id="KW-0158">Chromosome</keyword>
<keyword id="KW-0175">Coiled coil</keyword>
<keyword id="KW-0238">DNA-binding</keyword>
<keyword id="KW-0488">Methylation</keyword>
<keyword id="KW-0539">Nucleus</keyword>
<keyword id="KW-0597">Phosphoprotein</keyword>
<keyword id="KW-1185">Reference proteome</keyword>
<proteinExistence type="evidence at protein level"/>
<feature type="chain" id="PRO_0000206145" description="Lamina-associated polypeptide 2, isoforms alpha/zeta">
    <location>
        <begin position="1"/>
        <end position="693"/>
    </location>
</feature>
<feature type="domain" description="LEM-like" evidence="4 5">
    <location>
        <begin position="5"/>
        <end position="48"/>
    </location>
</feature>
<feature type="domain" description="LEM" evidence="4">
    <location>
        <begin position="108"/>
        <end position="152"/>
    </location>
</feature>
<feature type="region of interest" description="Disordered" evidence="6">
    <location>
        <begin position="48"/>
        <end position="113"/>
    </location>
</feature>
<feature type="region of interest" description="Linker">
    <location>
        <begin position="49"/>
        <end position="107"/>
    </location>
</feature>
<feature type="region of interest" description="Disordered" evidence="6">
    <location>
        <begin position="148"/>
        <end position="211"/>
    </location>
</feature>
<feature type="region of interest" description="Disordered" evidence="6">
    <location>
        <begin position="227"/>
        <end position="270"/>
    </location>
</feature>
<feature type="region of interest" description="Disordered" evidence="6">
    <location>
        <begin position="332"/>
        <end position="351"/>
    </location>
</feature>
<feature type="region of interest" description="Disordered" evidence="6">
    <location>
        <begin position="412"/>
        <end position="442"/>
    </location>
</feature>
<feature type="coiled-coil region">
    <location>
        <begin position="557"/>
        <end position="656"/>
    </location>
</feature>
<feature type="short sequence motif" description="Nuclear localization signal" evidence="3">
    <location>
        <begin position="190"/>
        <end position="196"/>
    </location>
</feature>
<feature type="compositionally biased region" description="Basic and acidic residues" evidence="6">
    <location>
        <begin position="96"/>
        <end position="105"/>
    </location>
</feature>
<feature type="compositionally biased region" description="Polar residues" evidence="6">
    <location>
        <begin position="154"/>
        <end position="177"/>
    </location>
</feature>
<feature type="compositionally biased region" description="Basic and acidic residues" evidence="6">
    <location>
        <begin position="178"/>
        <end position="190"/>
    </location>
</feature>
<feature type="compositionally biased region" description="Basic and acidic residues" evidence="6">
    <location>
        <begin position="245"/>
        <end position="254"/>
    </location>
</feature>
<feature type="compositionally biased region" description="Low complexity" evidence="6">
    <location>
        <begin position="412"/>
        <end position="422"/>
    </location>
</feature>
<feature type="modified residue" description="Phosphoserine" evidence="2">
    <location>
        <position position="59"/>
    </location>
</feature>
<feature type="modified residue" description="Phosphoserine" evidence="10 11 12">
    <location>
        <position position="66"/>
    </location>
</feature>
<feature type="modified residue" description="Phosphoserine" evidence="10 11 12">
    <location>
        <position position="67"/>
    </location>
</feature>
<feature type="modified residue" description="Phosphothreonine" evidence="10 11 12">
    <location>
        <position position="74"/>
    </location>
</feature>
<feature type="modified residue" description="Phosphoserine" evidence="2">
    <location>
        <position position="79"/>
    </location>
</feature>
<feature type="modified residue" description="Phosphoserine" evidence="12">
    <location>
        <position position="82"/>
    </location>
</feature>
<feature type="modified residue" description="Omega-N-methylarginine" evidence="14">
    <location>
        <position position="85"/>
    </location>
</feature>
<feature type="modified residue" description="Omega-N-methylarginine" evidence="14">
    <location>
        <position position="87"/>
    </location>
</feature>
<feature type="modified residue" description="Phosphothreonine" evidence="12">
    <location>
        <position position="153"/>
    </location>
</feature>
<feature type="modified residue" description="Phosphoserine" evidence="12">
    <location>
        <position position="155"/>
    </location>
</feature>
<feature type="modified residue" description="Phosphoserine" evidence="12">
    <location>
        <position position="158"/>
    </location>
</feature>
<feature type="modified residue" description="Phosphothreonine" evidence="10 12">
    <location>
        <position position="159"/>
    </location>
</feature>
<feature type="modified residue" description="Phosphothreonine" evidence="2">
    <location>
        <position position="163"/>
    </location>
</feature>
<feature type="modified residue" description="Phosphoserine" evidence="12">
    <location>
        <position position="165"/>
    </location>
</feature>
<feature type="modified residue" description="Phosphoserine" evidence="12">
    <location>
        <position position="167"/>
    </location>
</feature>
<feature type="modified residue" description="Phosphoserine" evidence="2">
    <location>
        <position position="310"/>
    </location>
</feature>
<feature type="modified residue" description="Omega-N-methylarginine" evidence="14">
    <location>
        <position position="329"/>
    </location>
</feature>
<feature type="modified residue" description="Phosphoserine" evidence="2">
    <location>
        <position position="349"/>
    </location>
</feature>
<feature type="modified residue" description="Phosphoserine" evidence="2">
    <location>
        <position position="352"/>
    </location>
</feature>
<feature type="modified residue" description="Phosphoserine" evidence="2">
    <location>
        <position position="368"/>
    </location>
</feature>
<feature type="modified residue" description="Phosphoserine" evidence="12">
    <location>
        <position position="420"/>
    </location>
</feature>
<feature type="modified residue" description="Phosphoserine" evidence="10 12">
    <location>
        <position position="422"/>
    </location>
</feature>
<feature type="modified residue" description="N6-acetyllysine" evidence="2">
    <location>
        <position position="655"/>
    </location>
</feature>
<feature type="splice variant" id="VSP_010128" description="In isoform Zeta." evidence="8">
    <original>GKKKEHKKVKSARDCVPFSELASTPSGAFFQGISFPEI</original>
    <variation>DSKIELKLEKREPLKGRAKTPVTLKQRRTEHNQVFVVL</variation>
    <location>
        <begin position="188"/>
        <end position="225"/>
    </location>
</feature>
<feature type="splice variant" id="VSP_010129" description="In isoform Zeta." evidence="8">
    <location>
        <begin position="226"/>
        <end position="693"/>
    </location>
</feature>
<feature type="sequence conflict" description="In Ref. 1; AAC52573/AAC52578." evidence="9" ref="1">
    <original>EP</original>
    <variation>DA</variation>
    <location>
        <begin position="72"/>
        <end position="73"/>
    </location>
</feature>
<feature type="sequence conflict" description="In Ref. 1; AAC52578." evidence="9" ref="1">
    <original>KGQT</original>
    <variation>RGRP</variation>
    <location>
        <begin position="262"/>
        <end position="265"/>
    </location>
</feature>
<feature type="sequence conflict" description="In Ref. 1; AAC52578." evidence="9" ref="1">
    <original>SS</original>
    <variation>LC</variation>
    <location>
        <begin position="280"/>
        <end position="281"/>
    </location>
</feature>
<feature type="sequence conflict" description="In Ref. 1; AAC52578." evidence="9" ref="1">
    <original>DIV</original>
    <variation>EHS</variation>
    <location>
        <begin position="322"/>
        <end position="324"/>
    </location>
</feature>
<feature type="sequence conflict" description="In Ref. 1; AAC52578." evidence="9" ref="1">
    <original>GT</original>
    <variation>RS</variation>
    <location>
        <begin position="393"/>
        <end position="394"/>
    </location>
</feature>
<feature type="sequence conflict" description="In Ref. 1; AAC52578." evidence="9" ref="1">
    <original>D</original>
    <variation>I</variation>
    <location>
        <position position="606"/>
    </location>
</feature>
<feature type="helix" evidence="15">
    <location>
        <begin position="495"/>
        <end position="504"/>
    </location>
</feature>
<feature type="helix" evidence="15">
    <location>
        <begin position="505"/>
        <end position="507"/>
    </location>
</feature>
<feature type="strand" evidence="15">
    <location>
        <begin position="508"/>
        <end position="510"/>
    </location>
</feature>
<feature type="turn" evidence="15">
    <location>
        <begin position="516"/>
        <end position="518"/>
    </location>
</feature>
<feature type="helix" evidence="15">
    <location>
        <begin position="524"/>
        <end position="530"/>
    </location>
</feature>
<feature type="helix" evidence="15">
    <location>
        <begin position="537"/>
        <end position="541"/>
    </location>
</feature>
<feature type="helix" evidence="15">
    <location>
        <begin position="558"/>
        <end position="604"/>
    </location>
</feature>
<feature type="helix" evidence="15">
    <location>
        <begin position="610"/>
        <end position="654"/>
    </location>
</feature>
<feature type="strand" evidence="15">
    <location>
        <begin position="655"/>
        <end position="657"/>
    </location>
</feature>
<feature type="helix" evidence="15">
    <location>
        <begin position="661"/>
        <end position="669"/>
    </location>
</feature>
<feature type="strand" evidence="15">
    <location>
        <begin position="674"/>
        <end position="678"/>
    </location>
</feature>
<feature type="modified residue" description="N6-acetyllysine" evidence="13">
    <location sequence="Q61033-2">
        <position position="206"/>
    </location>
</feature>
<dbReference type="EMBL" id="U39073">
    <property type="protein sequence ID" value="AAC52573.1"/>
    <property type="molecule type" value="mRNA"/>
</dbReference>
<dbReference type="EMBL" id="U39078">
    <property type="protein sequence ID" value="AAC52578.1"/>
    <property type="molecule type" value="mRNA"/>
</dbReference>
<dbReference type="EMBL" id="CH466539">
    <property type="protein sequence ID" value="EDL21530.1"/>
    <property type="molecule type" value="Genomic_DNA"/>
</dbReference>
<dbReference type="EMBL" id="BC141062">
    <property type="protein sequence ID" value="AAI41063.1"/>
    <property type="molecule type" value="mRNA"/>
</dbReference>
<dbReference type="CCDS" id="CCDS24122.1">
    <molecule id="Q61033-1"/>
</dbReference>
<dbReference type="RefSeq" id="NP_035735.2">
    <molecule id="Q61033-1"/>
    <property type="nucleotide sequence ID" value="NM_011605.4"/>
</dbReference>
<dbReference type="PDB" id="2V0X">
    <property type="method" value="X-ray"/>
    <property type="resolution" value="2.20 A"/>
    <property type="chains" value="A/B=459-693"/>
</dbReference>
<dbReference type="PDBsum" id="2V0X"/>
<dbReference type="SMR" id="Q61033"/>
<dbReference type="BioGRID" id="204234">
    <property type="interactions" value="18"/>
</dbReference>
<dbReference type="DIP" id="DIP-29323N"/>
<dbReference type="FunCoup" id="Q61033">
    <property type="interactions" value="1494"/>
</dbReference>
<dbReference type="IntAct" id="Q61033">
    <property type="interactions" value="4"/>
</dbReference>
<dbReference type="MINT" id="Q61033"/>
<dbReference type="STRING" id="10090.ENSMUSP00000020123"/>
<dbReference type="GlyGen" id="Q61033">
    <property type="glycosylation" value="3 sites, 2 N-linked glycans (1 site), 1 O-linked glycan (1 site)"/>
</dbReference>
<dbReference type="iPTMnet" id="Q61033"/>
<dbReference type="SwissPalm" id="Q61033"/>
<dbReference type="jPOST" id="Q61033"/>
<dbReference type="PaxDb" id="10090-ENSMUSP00000020123"/>
<dbReference type="PeptideAtlas" id="Q61033"/>
<dbReference type="ProteomicsDB" id="264965">
    <molecule id="Q61033-1"/>
</dbReference>
<dbReference type="ProteomicsDB" id="264966">
    <molecule id="Q61033-2"/>
</dbReference>
<dbReference type="Pumba" id="Q61033"/>
<dbReference type="Antibodypedia" id="2387">
    <property type="antibodies" value="401 antibodies from 37 providers"/>
</dbReference>
<dbReference type="DNASU" id="21917"/>
<dbReference type="Ensembl" id="ENSMUST00000020123.7">
    <molecule id="Q61033-1"/>
    <property type="protein sequence ID" value="ENSMUSP00000020123.6"/>
    <property type="gene ID" value="ENSMUSG00000019961.18"/>
</dbReference>
<dbReference type="GeneID" id="21917"/>
<dbReference type="UCSC" id="uc007gtu.2">
    <molecule id="Q61033-2"/>
    <property type="organism name" value="mouse"/>
</dbReference>
<dbReference type="UCSC" id="uc007gtv.2">
    <molecule id="Q61033-1"/>
    <property type="organism name" value="mouse"/>
</dbReference>
<dbReference type="AGR" id="MGI:106920"/>
<dbReference type="CTD" id="7112"/>
<dbReference type="MGI" id="MGI:106920">
    <property type="gene designation" value="Tmpo"/>
</dbReference>
<dbReference type="VEuPathDB" id="HostDB:ENSMUSG00000019961"/>
<dbReference type="eggNOG" id="ENOG502QWCI">
    <property type="taxonomic scope" value="Eukaryota"/>
</dbReference>
<dbReference type="GeneTree" id="ENSGT00940000154098"/>
<dbReference type="HOGENOM" id="CLU_397364_0_0_1"/>
<dbReference type="InParanoid" id="Q61033"/>
<dbReference type="OrthoDB" id="10072362at2759"/>
<dbReference type="TreeFam" id="TF328426"/>
<dbReference type="BioGRID-ORCS" id="21917">
    <property type="hits" value="3 hits in 78 CRISPR screens"/>
</dbReference>
<dbReference type="ChiTaRS" id="Tmpo">
    <property type="organism name" value="mouse"/>
</dbReference>
<dbReference type="EvolutionaryTrace" id="Q61033"/>
<dbReference type="Proteomes" id="UP000000589">
    <property type="component" value="Chromosome 10"/>
</dbReference>
<dbReference type="RNAct" id="Q61033">
    <property type="molecule type" value="protein"/>
</dbReference>
<dbReference type="Bgee" id="ENSMUSG00000019961">
    <property type="expression patterns" value="Expressed in ectoderm and 279 other cell types or tissues"/>
</dbReference>
<dbReference type="ExpressionAtlas" id="Q61033">
    <property type="expression patterns" value="baseline and differential"/>
</dbReference>
<dbReference type="GO" id="GO:0000785">
    <property type="term" value="C:chromatin"/>
    <property type="evidence" value="ECO:0000266"/>
    <property type="project" value="MGI"/>
</dbReference>
<dbReference type="GO" id="GO:0005635">
    <property type="term" value="C:nuclear envelope"/>
    <property type="evidence" value="ECO:0000314"/>
    <property type="project" value="MGI"/>
</dbReference>
<dbReference type="GO" id="GO:0005634">
    <property type="term" value="C:nucleus"/>
    <property type="evidence" value="ECO:0000266"/>
    <property type="project" value="MGI"/>
</dbReference>
<dbReference type="GO" id="GO:0003677">
    <property type="term" value="F:DNA binding"/>
    <property type="evidence" value="ECO:0007669"/>
    <property type="project" value="UniProtKB-KW"/>
</dbReference>
<dbReference type="GO" id="GO:0042802">
    <property type="term" value="F:identical protein binding"/>
    <property type="evidence" value="ECO:0000353"/>
    <property type="project" value="IntAct"/>
</dbReference>
<dbReference type="GO" id="GO:0006355">
    <property type="term" value="P:regulation of DNA-templated transcription"/>
    <property type="evidence" value="ECO:0000314"/>
    <property type="project" value="MGI"/>
</dbReference>
<dbReference type="CDD" id="cd12940">
    <property type="entry name" value="LEM_LAP2_LEMD1"/>
    <property type="match status" value="1"/>
</dbReference>
<dbReference type="CDD" id="cd12935">
    <property type="entry name" value="LEM_like"/>
    <property type="match status" value="1"/>
</dbReference>
<dbReference type="DisProt" id="DP02874"/>
<dbReference type="FunFam" id="1.10.720.40:FF:000002">
    <property type="entry name" value="Thymopoietin isoform alpha"/>
    <property type="match status" value="1"/>
</dbReference>
<dbReference type="FunFam" id="1.10.720.40:FF:000003">
    <property type="entry name" value="thymopoietin isoform X1"/>
    <property type="match status" value="1"/>
</dbReference>
<dbReference type="Gene3D" id="1.10.287.3160">
    <property type="match status" value="1"/>
</dbReference>
<dbReference type="Gene3D" id="1.10.720.40">
    <property type="match status" value="2"/>
</dbReference>
<dbReference type="InterPro" id="IPR021623">
    <property type="entry name" value="LAP2alpha_C"/>
</dbReference>
<dbReference type="InterPro" id="IPR013146">
    <property type="entry name" value="LEM-like_dom"/>
</dbReference>
<dbReference type="InterPro" id="IPR011015">
    <property type="entry name" value="LEM/LEM-like_dom_sf"/>
</dbReference>
<dbReference type="InterPro" id="IPR003887">
    <property type="entry name" value="LEM_dom"/>
</dbReference>
<dbReference type="InterPro" id="IPR051656">
    <property type="entry name" value="LEM_domain"/>
</dbReference>
<dbReference type="PANTHER" id="PTHR12019:SF24">
    <property type="entry name" value="LAMINA-ASSOCIATED POLYPEPTIDE 2, ISOFORM ALPHA"/>
    <property type="match status" value="1"/>
</dbReference>
<dbReference type="PANTHER" id="PTHR12019">
    <property type="entry name" value="LAMINA-ASSOCIATED POLYPEPTIDE THYMOPOIETIN"/>
    <property type="match status" value="1"/>
</dbReference>
<dbReference type="Pfam" id="PF11560">
    <property type="entry name" value="LAP2alpha"/>
    <property type="match status" value="1"/>
</dbReference>
<dbReference type="Pfam" id="PF03020">
    <property type="entry name" value="LEM"/>
    <property type="match status" value="1"/>
</dbReference>
<dbReference type="Pfam" id="PF08198">
    <property type="entry name" value="Thymopoietin"/>
    <property type="match status" value="1"/>
</dbReference>
<dbReference type="SMART" id="SM00540">
    <property type="entry name" value="LEM"/>
    <property type="match status" value="1"/>
</dbReference>
<dbReference type="SMART" id="SM01261">
    <property type="entry name" value="Thymopoietin"/>
    <property type="match status" value="1"/>
</dbReference>
<dbReference type="SUPFAM" id="SSF63451">
    <property type="entry name" value="LEM domain"/>
    <property type="match status" value="2"/>
</dbReference>
<dbReference type="PROSITE" id="PS50954">
    <property type="entry name" value="LEM"/>
    <property type="match status" value="1"/>
</dbReference>
<dbReference type="PROSITE" id="PS50955">
    <property type="entry name" value="LEM_LIKE"/>
    <property type="match status" value="1"/>
</dbReference>
<comment type="function">
    <text evidence="1">May be involved in the structural organization of the nucleus and in the post-mitotic nuclear assembly. Plays an important role, together with LMNA, in the nuclear anchorage of RB1 (By similarity).</text>
</comment>
<comment type="subunit">
    <text evidence="1 2">Homooligomer. Interacts with LMNA, BANF1 and RB1 and with chromosomes. Associates directly or indirectly with lamins at specific cell-cycle stages (By similarity). Interacts with CMTM6 (By similarity).</text>
</comment>
<comment type="interaction">
    <interactant intactId="EBI-15641551">
        <id>Q61033-1</id>
    </interactant>
    <interactant intactId="EBI-15641551">
        <id>Q61033-1</id>
        <label>Tmpo</label>
    </interactant>
    <organismsDiffer>false</organismsDiffer>
    <experiments>3</experiments>
</comment>
<comment type="subcellular location">
    <subcellularLocation>
        <location evidence="1">Nucleus</location>
    </subcellularLocation>
    <subcellularLocation>
        <location evidence="1">Chromosome</location>
    </subcellularLocation>
    <text evidence="1">Expressed diffusely throughout the nucleus.</text>
</comment>
<comment type="alternative products">
    <event type="alternative splicing"/>
    <isoform>
        <id>Q61033-1</id>
        <name>Alpha</name>
        <sequence type="displayed"/>
    </isoform>
    <isoform>
        <id>Q61033-2</id>
        <name>Zeta</name>
        <sequence type="described" ref="VSP_010128 VSP_010129"/>
    </isoform>
    <isoform>
        <id>Q61029-1</id>
        <name>Beta</name>
        <sequence type="external"/>
    </isoform>
    <isoform>
        <id>Q61029-2</id>
        <name>Delta</name>
        <sequence type="external"/>
    </isoform>
    <isoform>
        <id>Q61029-3</id>
        <name>Epsilon</name>
        <sequence type="external"/>
    </isoform>
    <isoform>
        <id>Q61029-4</id>
        <name>Gamma</name>
        <sequence type="external"/>
    </isoform>
</comment>
<comment type="domain">
    <text evidence="1">The N-terminal part contains two structurally independent, non-interacting domains: LEM-like (also called LAP2-N or LEM-D) and LEM (also called LAP2-C or LEM-B). LEM-like binds DNA while LEM interacts with BANF1 (By similarity).</text>
</comment>
<comment type="domain">
    <text evidence="7">The C-terminal domain forms a four-stranded coiled coil.</text>
</comment>
<comment type="PTM">
    <text evidence="1">Phosphorylated in a mitose-specific manner.</text>
</comment>
<comment type="similarity">
    <text evidence="9">Belongs to the LEM family.</text>
</comment>
<gene>
    <name type="primary">Tmpo</name>
    <name type="synonym">Lap2</name>
</gene>
<organism>
    <name type="scientific">Mus musculus</name>
    <name type="common">Mouse</name>
    <dbReference type="NCBI Taxonomy" id="10090"/>
    <lineage>
        <taxon>Eukaryota</taxon>
        <taxon>Metazoa</taxon>
        <taxon>Chordata</taxon>
        <taxon>Craniata</taxon>
        <taxon>Vertebrata</taxon>
        <taxon>Euteleostomi</taxon>
        <taxon>Mammalia</taxon>
        <taxon>Eutheria</taxon>
        <taxon>Euarchontoglires</taxon>
        <taxon>Glires</taxon>
        <taxon>Rodentia</taxon>
        <taxon>Myomorpha</taxon>
        <taxon>Muroidea</taxon>
        <taxon>Muridae</taxon>
        <taxon>Murinae</taxon>
        <taxon>Mus</taxon>
        <taxon>Mus</taxon>
    </lineage>
</organism>
<name>LAP2A_MOUSE</name>
<sequence length="693" mass="75168">MPEFLEDPSVLTKDKLKSELVANNVTLPAGEQRKDVYVQLYLQHLTARNRPPLAAGANSKGPPDFSSDEEREPTPVLGSGASVGRGRGAVGRKATKKTDKPRLEDKDDLDVTELSNEELLDQLVRYGVNPGPIVGTTRKLYEKKLLKLREQGTESRSSTPLPTVSSSAENTRQNGSNDSDRYSDNDEGKKKEHKKVKSARDCVPFSELASTPSGAFFQGISFPEISTRPPLGRTELQAAKKVQTTKRDPPRETCTDTALPGKGQTHKLAPGRSLFIPSESSYDRCVEKSSSPSSQREFAARLVSAAASPSLIRETTTTYSKDIVENICRGGKSRAQPLRAEEPGVSDQSVFSSEREVLQESERSQVISPPLAQAIRDYVNSLLVQGGVGSLPGTSDSVPTLDVENICKRLSQSSYQDSESLSPPRKVPRLSEKPARGGDSGSCVAFQNTPGSEHRSSFAKSVVSHSLTTLGVEVSKPPPQHDKIEASEPSFPLHESILKVVEEEWQQIDRQLPSVACRYPVSSIEAARILSVPKVDDEILGFISEATPRAATQASSTESCDKHLDLALCRSYEAAASALQIAAHTAFVAKSLQADISQAAQIINSDPSDAQQALRILNRTYDAASYLCDAAFDEVRMSACAMGSSTMGRRYLWLKDCKISPASKNKLTVAPFKGGTLFGGEVHKVIKKRGNKQ</sequence>
<evidence type="ECO:0000250" key="1"/>
<evidence type="ECO:0000250" key="2">
    <source>
        <dbReference type="UniProtKB" id="P42166"/>
    </source>
</evidence>
<evidence type="ECO:0000255" key="3"/>
<evidence type="ECO:0000255" key="4">
    <source>
        <dbReference type="PROSITE-ProRule" id="PRU00313"/>
    </source>
</evidence>
<evidence type="ECO:0000255" key="5">
    <source>
        <dbReference type="PROSITE-ProRule" id="PRU00314"/>
    </source>
</evidence>
<evidence type="ECO:0000256" key="6">
    <source>
        <dbReference type="SAM" id="MobiDB-lite"/>
    </source>
</evidence>
<evidence type="ECO:0000269" key="7">
    <source>
    </source>
</evidence>
<evidence type="ECO:0000303" key="8">
    <source>
    </source>
</evidence>
<evidence type="ECO:0000305" key="9"/>
<evidence type="ECO:0007744" key="10">
    <source>
    </source>
</evidence>
<evidence type="ECO:0007744" key="11">
    <source>
    </source>
</evidence>
<evidence type="ECO:0007744" key="12">
    <source>
    </source>
</evidence>
<evidence type="ECO:0007744" key="13">
    <source>
    </source>
</evidence>
<evidence type="ECO:0007744" key="14">
    <source>
    </source>
</evidence>
<evidence type="ECO:0007829" key="15">
    <source>
        <dbReference type="PDB" id="2V0X"/>
    </source>
</evidence>
<protein>
    <recommendedName>
        <fullName>Lamina-associated polypeptide 2, isoforms alpha/zeta</fullName>
    </recommendedName>
    <alternativeName>
        <fullName>Thymopoietin isoforms alpha/zeta</fullName>
        <shortName>TP alpha/zeta</shortName>
    </alternativeName>
</protein>
<accession>Q61033</accession>
<accession>B2RUB9</accession>
<accession>Q61028</accession>
<reference key="1">
    <citation type="journal article" date="1996" name="Genome Res.">
        <title>The characterization and localization of the mouse thymopoietin/lamina-associated polypeptide 2 gene and its alternatively spliced products.</title>
        <authorList>
            <person name="Berger R."/>
            <person name="Theodor L."/>
            <person name="Shoham J."/>
            <person name="Gokkel E."/>
            <person name="Brok-Simoni F."/>
            <person name="Avraham K.B."/>
            <person name="Copeland N.G."/>
            <person name="Jenkins N.A."/>
            <person name="Rechavi G."/>
            <person name="Simon A.J."/>
        </authorList>
    </citation>
    <scope>NUCLEOTIDE SEQUENCE [MRNA] (ISOFORMS ALPHA; BETA; GAMMA; DELTA; EPSILON AND ZETA)</scope>
    <source>
        <strain>C57BL/6 X DBA/2</strain>
        <tissue>Thymus</tissue>
    </source>
</reference>
<reference key="2">
    <citation type="submission" date="2005-07" db="EMBL/GenBank/DDBJ databases">
        <authorList>
            <person name="Mural R.J."/>
            <person name="Adams M.D."/>
            <person name="Myers E.W."/>
            <person name="Smith H.O."/>
            <person name="Venter J.C."/>
        </authorList>
    </citation>
    <scope>NUCLEOTIDE SEQUENCE [LARGE SCALE GENOMIC DNA]</scope>
</reference>
<reference key="3">
    <citation type="journal article" date="2004" name="Genome Res.">
        <title>The status, quality, and expansion of the NIH full-length cDNA project: the Mammalian Gene Collection (MGC).</title>
        <authorList>
            <consortium name="The MGC Project Team"/>
        </authorList>
    </citation>
    <scope>NUCLEOTIDE SEQUENCE [LARGE SCALE MRNA]</scope>
    <source>
        <tissue>Brain</tissue>
    </source>
</reference>
<reference key="4">
    <citation type="journal article" date="2006" name="Mol. Cell. Proteomics">
        <title>Comprehensive identification of phosphorylation sites in postsynaptic density preparations.</title>
        <authorList>
            <person name="Trinidad J.C."/>
            <person name="Specht C.G."/>
            <person name="Thalhammer A."/>
            <person name="Schoepfer R."/>
            <person name="Burlingame A.L."/>
        </authorList>
    </citation>
    <scope>IDENTIFICATION BY MASS SPECTROMETRY [LARGE SCALE ANALYSIS]</scope>
    <source>
        <tissue>Brain</tissue>
    </source>
</reference>
<reference key="5">
    <citation type="journal article" date="2007" name="Proc. Natl. Acad. Sci. U.S.A.">
        <title>Large-scale phosphorylation analysis of mouse liver.</title>
        <authorList>
            <person name="Villen J."/>
            <person name="Beausoleil S.A."/>
            <person name="Gerber S.A."/>
            <person name="Gygi S.P."/>
        </authorList>
    </citation>
    <scope>PHOSPHORYLATION [LARGE SCALE ANALYSIS] AT SER-66; SER-67; THR-74; THR-159 AND SER-422</scope>
    <scope>IDENTIFICATION BY MASS SPECTROMETRY [LARGE SCALE ANALYSIS]</scope>
    <source>
        <tissue>Liver</tissue>
    </source>
</reference>
<reference key="6">
    <citation type="journal article" date="2009" name="Immunity">
        <title>The phagosomal proteome in interferon-gamma-activated macrophages.</title>
        <authorList>
            <person name="Trost M."/>
            <person name="English L."/>
            <person name="Lemieux S."/>
            <person name="Courcelles M."/>
            <person name="Desjardins M."/>
            <person name="Thibault P."/>
        </authorList>
    </citation>
    <scope>IDENTIFICATION BY MASS SPECTROMETRY [LARGE SCALE ANALYSIS]</scope>
</reference>
<reference key="7">
    <citation type="journal article" date="2009" name="Mol. Cell. Proteomics">
        <title>Large scale localization of protein phosphorylation by use of electron capture dissociation mass spectrometry.</title>
        <authorList>
            <person name="Sweet S.M."/>
            <person name="Bailey C.M."/>
            <person name="Cunningham D.L."/>
            <person name="Heath J.K."/>
            <person name="Cooper H.J."/>
        </authorList>
    </citation>
    <scope>PHOSPHORYLATION [LARGE SCALE ANALYSIS] AT SER-66; SER-67 AND THR-74</scope>
    <scope>IDENTIFICATION BY MASS SPECTROMETRY [LARGE SCALE ANALYSIS]</scope>
    <source>
        <tissue>Embryonic fibroblast</tissue>
    </source>
</reference>
<reference key="8">
    <citation type="journal article" date="2010" name="Cell">
        <title>A tissue-specific atlas of mouse protein phosphorylation and expression.</title>
        <authorList>
            <person name="Huttlin E.L."/>
            <person name="Jedrychowski M.P."/>
            <person name="Elias J.E."/>
            <person name="Goswami T."/>
            <person name="Rad R."/>
            <person name="Beausoleil S.A."/>
            <person name="Villen J."/>
            <person name="Haas W."/>
            <person name="Sowa M.E."/>
            <person name="Gygi S.P."/>
        </authorList>
    </citation>
    <scope>PHOSPHORYLATION [LARGE SCALE ANALYSIS] AT SER-66; SER-67; THR-74; SER-82; THR-153; SER-155; SER-158; THR-159; SER-165; SER-167; SER-420 AND SER-422</scope>
    <scope>IDENTIFICATION BY MASS SPECTROMETRY [LARGE SCALE ANALYSIS]</scope>
    <source>
        <tissue>Brain</tissue>
        <tissue>Brown adipose tissue</tissue>
        <tissue>Heart</tissue>
        <tissue>Kidney</tissue>
        <tissue>Liver</tissue>
        <tissue>Lung</tissue>
        <tissue>Pancreas</tissue>
        <tissue>Spleen</tissue>
        <tissue>Testis</tissue>
    </source>
</reference>
<reference key="9">
    <citation type="journal article" date="2013" name="Mol. Cell">
        <title>SIRT5-mediated lysine desuccinylation impacts diverse metabolic pathways.</title>
        <authorList>
            <person name="Park J."/>
            <person name="Chen Y."/>
            <person name="Tishkoff D.X."/>
            <person name="Peng C."/>
            <person name="Tan M."/>
            <person name="Dai L."/>
            <person name="Xie Z."/>
            <person name="Zhang Y."/>
            <person name="Zwaans B.M."/>
            <person name="Skinner M.E."/>
            <person name="Lombard D.B."/>
            <person name="Zhao Y."/>
        </authorList>
    </citation>
    <scope>ACETYLATION [LARGE SCALE ANALYSIS] AT LYS-206 (ISOFORM ZETA)</scope>
    <scope>IDENTIFICATION BY MASS SPECTROMETRY [LARGE SCALE ANALYSIS]</scope>
    <source>
        <tissue>Embryonic fibroblast</tissue>
    </source>
</reference>
<reference key="10">
    <citation type="journal article" date="2014" name="Mol. Cell. Proteomics">
        <title>Immunoaffinity enrichment and mass spectrometry analysis of protein methylation.</title>
        <authorList>
            <person name="Guo A."/>
            <person name="Gu H."/>
            <person name="Zhou J."/>
            <person name="Mulhern D."/>
            <person name="Wang Y."/>
            <person name="Lee K.A."/>
            <person name="Yang V."/>
            <person name="Aguiar M."/>
            <person name="Kornhauser J."/>
            <person name="Jia X."/>
            <person name="Ren J."/>
            <person name="Beausoleil S.A."/>
            <person name="Silva J.C."/>
            <person name="Vemulapalli V."/>
            <person name="Bedford M.T."/>
            <person name="Comb M.J."/>
        </authorList>
    </citation>
    <scope>METHYLATION [LARGE SCALE ANALYSIS] AT ARG-85; ARG-87 AND ARG-329</scope>
    <scope>IDENTIFICATION BY MASS SPECTROMETRY [LARGE SCALE ANALYSIS]</scope>
    <source>
        <tissue>Brain</tissue>
        <tissue>Embryo</tissue>
    </source>
</reference>
<reference key="11">
    <citation type="journal article" date="2007" name="Structure">
        <title>Structural basis for dimerization of LAP2alpha, a component of the nuclear lamina.</title>
        <authorList>
            <person name="Bradley C.M."/>
            <person name="Jones S."/>
            <person name="Huang Y."/>
            <person name="Suzuki Y."/>
            <person name="Kvaratskhelia M."/>
            <person name="Hickman A.B."/>
            <person name="Craigie R."/>
            <person name="Dyda F."/>
        </authorList>
    </citation>
    <scope>X-RAY CRYSTALLOGRAPHY (2.2 ANGSTROMS) OF 459-693</scope>
    <scope>IDENTIFICATION BY MASS SPECTROMETRY</scope>
    <scope>DOMAIN</scope>
    <scope>INTERACTION WITH LMNA</scope>
    <scope>SUBUNIT</scope>
</reference>